<keyword id="KW-0997">Cell inner membrane</keyword>
<keyword id="KW-1003">Cell membrane</keyword>
<keyword id="KW-0472">Membrane</keyword>
<keyword id="KW-0653">Protein transport</keyword>
<keyword id="KW-1185">Reference proteome</keyword>
<keyword id="KW-0812">Transmembrane</keyword>
<keyword id="KW-1133">Transmembrane helix</keyword>
<keyword id="KW-0813">Transport</keyword>
<accession>O25754</accession>
<evidence type="ECO:0000255" key="1"/>
<evidence type="ECO:0000305" key="2"/>
<proteinExistence type="inferred from homology"/>
<feature type="chain" id="PRO_0000129136" description="Putative biopolymer transport protein ExbD-like 1">
    <location>
        <begin position="1"/>
        <end position="133"/>
    </location>
</feature>
<feature type="topological domain" description="Cytoplasmic" evidence="1">
    <location>
        <begin position="1"/>
        <end position="15"/>
    </location>
</feature>
<feature type="transmembrane region" description="Helical" evidence="1">
    <location>
        <begin position="16"/>
        <end position="32"/>
    </location>
</feature>
<feature type="topological domain" description="Periplasmic" evidence="1">
    <location>
        <begin position="33"/>
        <end position="133"/>
    </location>
</feature>
<reference key="1">
    <citation type="journal article" date="1997" name="Nature">
        <title>The complete genome sequence of the gastric pathogen Helicobacter pylori.</title>
        <authorList>
            <person name="Tomb J.-F."/>
            <person name="White O."/>
            <person name="Kerlavage A.R."/>
            <person name="Clayton R.A."/>
            <person name="Sutton G.G."/>
            <person name="Fleischmann R.D."/>
            <person name="Ketchum K.A."/>
            <person name="Klenk H.-P."/>
            <person name="Gill S.R."/>
            <person name="Dougherty B.A."/>
            <person name="Nelson K.E."/>
            <person name="Quackenbush J."/>
            <person name="Zhou L."/>
            <person name="Kirkness E.F."/>
            <person name="Peterson S.N."/>
            <person name="Loftus B.J."/>
            <person name="Richardson D.L."/>
            <person name="Dodson R.J."/>
            <person name="Khalak H.G."/>
            <person name="Glodek A."/>
            <person name="McKenney K."/>
            <person name="FitzGerald L.M."/>
            <person name="Lee N."/>
            <person name="Adams M.D."/>
            <person name="Hickey E.K."/>
            <person name="Berg D.E."/>
            <person name="Gocayne J.D."/>
            <person name="Utterback T.R."/>
            <person name="Peterson J.D."/>
            <person name="Kelley J.M."/>
            <person name="Cotton M.D."/>
            <person name="Weidman J.F."/>
            <person name="Fujii C."/>
            <person name="Bowman C."/>
            <person name="Watthey L."/>
            <person name="Wallin E."/>
            <person name="Hayes W.S."/>
            <person name="Borodovsky M."/>
            <person name="Karp P.D."/>
            <person name="Smith H.O."/>
            <person name="Fraser C.M."/>
            <person name="Venter J.C."/>
        </authorList>
    </citation>
    <scope>NUCLEOTIDE SEQUENCE [LARGE SCALE GENOMIC DNA]</scope>
    <source>
        <strain>ATCC 700392 / 26695</strain>
    </source>
</reference>
<protein>
    <recommendedName>
        <fullName>Putative biopolymer transport protein ExbD-like 1</fullName>
    </recommendedName>
</protein>
<gene>
    <name type="ordered locus">HP_1129</name>
</gene>
<comment type="subcellular location">
    <subcellularLocation>
        <location evidence="2">Cell inner membrane</location>
        <topology evidence="2">Single-pass type II membrane protein</topology>
    </subcellularLocation>
</comment>
<comment type="similarity">
    <text evidence="2">Belongs to the ExbD/TolR family.</text>
</comment>
<sequence length="133" mass="15414">MNYDNYWDEDKPELNITPLVDVMLVLLAILMVTTPTLTYKEEIALPSGSKTARATQDKMIEIRMDKDAKIYIDSQTYEYNSFPDTFNLLSKKYDKDTRVSIRADKRLTYDKVIYLLKTIKEAGFLKVSLITSP</sequence>
<name>EXDL1_HELPY</name>
<dbReference type="EMBL" id="AE000511">
    <property type="protein sequence ID" value="AAD08171.1"/>
    <property type="molecule type" value="Genomic_DNA"/>
</dbReference>
<dbReference type="PIR" id="A64661">
    <property type="entry name" value="A64661"/>
</dbReference>
<dbReference type="RefSeq" id="NP_207920.1">
    <property type="nucleotide sequence ID" value="NC_000915.1"/>
</dbReference>
<dbReference type="RefSeq" id="WP_001105106.1">
    <property type="nucleotide sequence ID" value="NC_018939.1"/>
</dbReference>
<dbReference type="SMR" id="O25754"/>
<dbReference type="DIP" id="DIP-3550N"/>
<dbReference type="FunCoup" id="O25754">
    <property type="interactions" value="112"/>
</dbReference>
<dbReference type="IntAct" id="O25754">
    <property type="interactions" value="5"/>
</dbReference>
<dbReference type="MINT" id="O25754"/>
<dbReference type="STRING" id="85962.HP_1129"/>
<dbReference type="PaxDb" id="85962-C694_05825"/>
<dbReference type="EnsemblBacteria" id="AAD08171">
    <property type="protein sequence ID" value="AAD08171"/>
    <property type="gene ID" value="HP_1129"/>
</dbReference>
<dbReference type="KEGG" id="heo:C694_05825"/>
<dbReference type="KEGG" id="hpy:HP_1129"/>
<dbReference type="PATRIC" id="fig|85962.47.peg.1211"/>
<dbReference type="eggNOG" id="COG0848">
    <property type="taxonomic scope" value="Bacteria"/>
</dbReference>
<dbReference type="InParanoid" id="O25754"/>
<dbReference type="OrthoDB" id="9798629at2"/>
<dbReference type="PhylomeDB" id="O25754"/>
<dbReference type="Proteomes" id="UP000000429">
    <property type="component" value="Chromosome"/>
</dbReference>
<dbReference type="GO" id="GO:0005886">
    <property type="term" value="C:plasma membrane"/>
    <property type="evidence" value="ECO:0000318"/>
    <property type="project" value="GO_Central"/>
</dbReference>
<dbReference type="GO" id="GO:0022857">
    <property type="term" value="F:transmembrane transporter activity"/>
    <property type="evidence" value="ECO:0007669"/>
    <property type="project" value="InterPro"/>
</dbReference>
<dbReference type="GO" id="GO:0015031">
    <property type="term" value="P:protein transport"/>
    <property type="evidence" value="ECO:0007669"/>
    <property type="project" value="UniProtKB-KW"/>
</dbReference>
<dbReference type="Gene3D" id="3.30.420.270">
    <property type="match status" value="1"/>
</dbReference>
<dbReference type="InterPro" id="IPR003400">
    <property type="entry name" value="ExbD"/>
</dbReference>
<dbReference type="PANTHER" id="PTHR30558:SF12">
    <property type="entry name" value="BIOPOLYMER TRANSPORT PROTEIN EXBD"/>
    <property type="match status" value="1"/>
</dbReference>
<dbReference type="PANTHER" id="PTHR30558">
    <property type="entry name" value="EXBD MEMBRANE COMPONENT OF PMF-DRIVEN MACROMOLECULE IMPORT SYSTEM"/>
    <property type="match status" value="1"/>
</dbReference>
<dbReference type="Pfam" id="PF02472">
    <property type="entry name" value="ExbD"/>
    <property type="match status" value="1"/>
</dbReference>
<organism>
    <name type="scientific">Helicobacter pylori (strain ATCC 700392 / 26695)</name>
    <name type="common">Campylobacter pylori</name>
    <dbReference type="NCBI Taxonomy" id="85962"/>
    <lineage>
        <taxon>Bacteria</taxon>
        <taxon>Pseudomonadati</taxon>
        <taxon>Campylobacterota</taxon>
        <taxon>Epsilonproteobacteria</taxon>
        <taxon>Campylobacterales</taxon>
        <taxon>Helicobacteraceae</taxon>
        <taxon>Helicobacter</taxon>
    </lineage>
</organism>